<organism>
    <name type="scientific">Bacillus subtilis (strain 168)</name>
    <dbReference type="NCBI Taxonomy" id="224308"/>
    <lineage>
        <taxon>Bacteria</taxon>
        <taxon>Bacillati</taxon>
        <taxon>Bacillota</taxon>
        <taxon>Bacilli</taxon>
        <taxon>Bacillales</taxon>
        <taxon>Bacillaceae</taxon>
        <taxon>Bacillus</taxon>
    </lineage>
</organism>
<keyword id="KW-1185">Reference proteome</keyword>
<keyword id="KW-0749">Sporulation</keyword>
<protein>
    <recommendedName>
        <fullName>Spore coat protein B</fullName>
    </recommendedName>
</protein>
<dbReference type="EMBL" id="Z93767">
    <property type="protein sequence ID" value="CAB07789.1"/>
    <property type="molecule type" value="Genomic_DNA"/>
</dbReference>
<dbReference type="EMBL" id="AL009126">
    <property type="protein sequence ID" value="CAB15622.1"/>
    <property type="molecule type" value="Genomic_DNA"/>
</dbReference>
<dbReference type="EMBL" id="X98342">
    <property type="status" value="NOT_ANNOTATED_CDS"/>
    <property type="molecule type" value="Genomic_DNA"/>
</dbReference>
<dbReference type="EMBL" id="X05679">
    <property type="protein sequence ID" value="CAA29166.1"/>
    <property type="molecule type" value="Genomic_DNA"/>
</dbReference>
<dbReference type="PIR" id="G69604">
    <property type="entry name" value="G69604"/>
</dbReference>
<dbReference type="RefSeq" id="NP_391486.1">
    <property type="nucleotide sequence ID" value="NC_000964.3"/>
</dbReference>
<dbReference type="RefSeq" id="WP_003242882.1">
    <property type="nucleotide sequence ID" value="NZ_OZ025638.1"/>
</dbReference>
<dbReference type="FunCoup" id="P07789">
    <property type="interactions" value="65"/>
</dbReference>
<dbReference type="STRING" id="224308.BSU36050"/>
<dbReference type="PaxDb" id="224308-BSU36050"/>
<dbReference type="EnsemblBacteria" id="CAB15622">
    <property type="protein sequence ID" value="CAB15622"/>
    <property type="gene ID" value="BSU_36050"/>
</dbReference>
<dbReference type="GeneID" id="936870"/>
<dbReference type="KEGG" id="bsu:BSU36050"/>
<dbReference type="PATRIC" id="fig|224308.179.peg.3902"/>
<dbReference type="eggNOG" id="ENOG5032Z4Q">
    <property type="taxonomic scope" value="Bacteria"/>
</dbReference>
<dbReference type="InParanoid" id="P07789"/>
<dbReference type="OrthoDB" id="2452727at2"/>
<dbReference type="BioCyc" id="BSUB:BSU36050-MONOMER"/>
<dbReference type="Proteomes" id="UP000001570">
    <property type="component" value="Chromosome"/>
</dbReference>
<dbReference type="GO" id="GO:0030435">
    <property type="term" value="P:sporulation resulting in formation of a cellular spore"/>
    <property type="evidence" value="ECO:0007669"/>
    <property type="project" value="UniProtKB-KW"/>
</dbReference>
<feature type="chain" id="PRO_0000079258" description="Spore coat protein B">
    <location>
        <begin position="1"/>
        <end position="380"/>
    </location>
</feature>
<feature type="region of interest" description="Disordered" evidence="1">
    <location>
        <begin position="224"/>
        <end position="364"/>
    </location>
</feature>
<feature type="compositionally biased region" description="Basic and acidic residues" evidence="1">
    <location>
        <begin position="229"/>
        <end position="248"/>
    </location>
</feature>
<feature type="compositionally biased region" description="Low complexity" evidence="1">
    <location>
        <begin position="275"/>
        <end position="288"/>
    </location>
</feature>
<feature type="compositionally biased region" description="Low complexity" evidence="1">
    <location>
        <begin position="296"/>
        <end position="315"/>
    </location>
</feature>
<feature type="compositionally biased region" description="Low complexity" evidence="1">
    <location>
        <begin position="338"/>
        <end position="356"/>
    </location>
</feature>
<feature type="sequence conflict" description="In Ref. 3." evidence="2" ref="3">
    <original>AVKS</original>
    <variation>GPAA</variation>
    <location>
        <begin position="44"/>
        <end position="47"/>
    </location>
</feature>
<accession>P07789</accession>
<accession>O05222</accession>
<proteinExistence type="predicted"/>
<gene>
    <name type="primary">cotB</name>
    <name type="ordered locus">BSU36050</name>
</gene>
<evidence type="ECO:0000256" key="1">
    <source>
        <dbReference type="SAM" id="MobiDB-lite"/>
    </source>
</evidence>
<evidence type="ECO:0000305" key="2"/>
<name>COTB_BACSU</name>
<sequence>MSKRRMKYHSNNEISYYNFLHSMKDKIVTVYRGGPESKKGKLTAVKSDYIALQAEKKIIYYQLEHVKSITEDTNNSTTTIETEEMLDADDFHSLIGHLINQSVQFNQGGPESKKGRLVWLGDDYAALNTNEDGVVYFNIHHIKSISKHEPDLKIEEQTPVGVLEADDLSEVFKSLTHKWVSINRGGPEAIEGILVDNADGHYTIVKNQEVLRIYPFHIKSISLGPKGSYKKEDQKNEQNQEDNNDKDSNSFISSKSYSSSKSSKRSLKSSDDQSSKSGRSSRSKSSSKSSKRSLKSSDYQSSKSGRSSRSKSSSKSSKRSLKSSDYQSSKSSKRSPRSSDYQSSRSPGYSSSIKSSGKQKEDYSYETIVRTIDYHWKRKF</sequence>
<reference key="1">
    <citation type="journal article" date="1997" name="Microbiology">
        <title>The Bacillus subtilis genome from gerBC (311 degrees) to licR (334 degrees).</title>
        <authorList>
            <person name="Presecan E."/>
            <person name="Moszer I."/>
            <person name="Boursier L."/>
            <person name="Cruz Ramos H."/>
            <person name="De La Fuente V."/>
            <person name="Hullo M.-F."/>
            <person name="Lelong C."/>
            <person name="Schleich S."/>
            <person name="Sekowska A."/>
            <person name="Song B.H."/>
            <person name="Villani G."/>
            <person name="Kunst F."/>
            <person name="Danchin A."/>
            <person name="Glaser P."/>
        </authorList>
    </citation>
    <scope>NUCLEOTIDE SEQUENCE [GENOMIC DNA]</scope>
    <source>
        <strain>168</strain>
    </source>
</reference>
<reference key="2">
    <citation type="journal article" date="1997" name="Nature">
        <title>The complete genome sequence of the Gram-positive bacterium Bacillus subtilis.</title>
        <authorList>
            <person name="Kunst F."/>
            <person name="Ogasawara N."/>
            <person name="Moszer I."/>
            <person name="Albertini A.M."/>
            <person name="Alloni G."/>
            <person name="Azevedo V."/>
            <person name="Bertero M.G."/>
            <person name="Bessieres P."/>
            <person name="Bolotin A."/>
            <person name="Borchert S."/>
            <person name="Borriss R."/>
            <person name="Boursier L."/>
            <person name="Brans A."/>
            <person name="Braun M."/>
            <person name="Brignell S.C."/>
            <person name="Bron S."/>
            <person name="Brouillet S."/>
            <person name="Bruschi C.V."/>
            <person name="Caldwell B."/>
            <person name="Capuano V."/>
            <person name="Carter N.M."/>
            <person name="Choi S.-K."/>
            <person name="Codani J.-J."/>
            <person name="Connerton I.F."/>
            <person name="Cummings N.J."/>
            <person name="Daniel R.A."/>
            <person name="Denizot F."/>
            <person name="Devine K.M."/>
            <person name="Duesterhoeft A."/>
            <person name="Ehrlich S.D."/>
            <person name="Emmerson P.T."/>
            <person name="Entian K.-D."/>
            <person name="Errington J."/>
            <person name="Fabret C."/>
            <person name="Ferrari E."/>
            <person name="Foulger D."/>
            <person name="Fritz C."/>
            <person name="Fujita M."/>
            <person name="Fujita Y."/>
            <person name="Fuma S."/>
            <person name="Galizzi A."/>
            <person name="Galleron N."/>
            <person name="Ghim S.-Y."/>
            <person name="Glaser P."/>
            <person name="Goffeau A."/>
            <person name="Golightly E.J."/>
            <person name="Grandi G."/>
            <person name="Guiseppi G."/>
            <person name="Guy B.J."/>
            <person name="Haga K."/>
            <person name="Haiech J."/>
            <person name="Harwood C.R."/>
            <person name="Henaut A."/>
            <person name="Hilbert H."/>
            <person name="Holsappel S."/>
            <person name="Hosono S."/>
            <person name="Hullo M.-F."/>
            <person name="Itaya M."/>
            <person name="Jones L.-M."/>
            <person name="Joris B."/>
            <person name="Karamata D."/>
            <person name="Kasahara Y."/>
            <person name="Klaerr-Blanchard M."/>
            <person name="Klein C."/>
            <person name="Kobayashi Y."/>
            <person name="Koetter P."/>
            <person name="Koningstein G."/>
            <person name="Krogh S."/>
            <person name="Kumano M."/>
            <person name="Kurita K."/>
            <person name="Lapidus A."/>
            <person name="Lardinois S."/>
            <person name="Lauber J."/>
            <person name="Lazarevic V."/>
            <person name="Lee S.-M."/>
            <person name="Levine A."/>
            <person name="Liu H."/>
            <person name="Masuda S."/>
            <person name="Mauel C."/>
            <person name="Medigue C."/>
            <person name="Medina N."/>
            <person name="Mellado R.P."/>
            <person name="Mizuno M."/>
            <person name="Moestl D."/>
            <person name="Nakai S."/>
            <person name="Noback M."/>
            <person name="Noone D."/>
            <person name="O'Reilly M."/>
            <person name="Ogawa K."/>
            <person name="Ogiwara A."/>
            <person name="Oudega B."/>
            <person name="Park S.-H."/>
            <person name="Parro V."/>
            <person name="Pohl T.M."/>
            <person name="Portetelle D."/>
            <person name="Porwollik S."/>
            <person name="Prescott A.M."/>
            <person name="Presecan E."/>
            <person name="Pujic P."/>
            <person name="Purnelle B."/>
            <person name="Rapoport G."/>
            <person name="Rey M."/>
            <person name="Reynolds S."/>
            <person name="Rieger M."/>
            <person name="Rivolta C."/>
            <person name="Rocha E."/>
            <person name="Roche B."/>
            <person name="Rose M."/>
            <person name="Sadaie Y."/>
            <person name="Sato T."/>
            <person name="Scanlan E."/>
            <person name="Schleich S."/>
            <person name="Schroeter R."/>
            <person name="Scoffone F."/>
            <person name="Sekiguchi J."/>
            <person name="Sekowska A."/>
            <person name="Seror S.J."/>
            <person name="Serror P."/>
            <person name="Shin B.-S."/>
            <person name="Soldo B."/>
            <person name="Sorokin A."/>
            <person name="Tacconi E."/>
            <person name="Takagi T."/>
            <person name="Takahashi H."/>
            <person name="Takemaru K."/>
            <person name="Takeuchi M."/>
            <person name="Tamakoshi A."/>
            <person name="Tanaka T."/>
            <person name="Terpstra P."/>
            <person name="Tognoni A."/>
            <person name="Tosato V."/>
            <person name="Uchiyama S."/>
            <person name="Vandenbol M."/>
            <person name="Vannier F."/>
            <person name="Vassarotti A."/>
            <person name="Viari A."/>
            <person name="Wambutt R."/>
            <person name="Wedler E."/>
            <person name="Wedler H."/>
            <person name="Weitzenegger T."/>
            <person name="Winters P."/>
            <person name="Wipat A."/>
            <person name="Yamamoto H."/>
            <person name="Yamane K."/>
            <person name="Yasumoto K."/>
            <person name="Yata K."/>
            <person name="Yoshida K."/>
            <person name="Yoshikawa H.-F."/>
            <person name="Zumstein E."/>
            <person name="Yoshikawa H."/>
            <person name="Danchin A."/>
        </authorList>
    </citation>
    <scope>NUCLEOTIDE SEQUENCE [LARGE SCALE GENOMIC DNA]</scope>
    <source>
        <strain>168</strain>
    </source>
</reference>
<reference key="3">
    <citation type="submission" date="1996-06" db="EMBL/GenBank/DDBJ databases">
        <authorList>
            <person name="Naclerio G."/>
            <person name="Baccigalupi L."/>
            <person name="Zilhao R."/>
            <person name="de Felice M."/>
            <person name="Ricca E."/>
        </authorList>
    </citation>
    <scope>NUCLEOTIDE SEQUENCE [GENOMIC DNA] OF 1-47</scope>
    <source>
        <strain>168 / PY17</strain>
    </source>
</reference>
<reference key="4">
    <citation type="journal article" date="1987" name="J. Mol. Biol.">
        <title>Genes encoding spore coat polypeptides from Bacillus subtilis.</title>
        <authorList>
            <person name="Donovan W."/>
            <person name="Zheng L."/>
            <person name="Sandman K."/>
            <person name="Losick R."/>
        </authorList>
    </citation>
    <scope>NUCLEOTIDE SEQUENCE [GENOMIC DNA] OF 1-23</scope>
</reference>